<reference key="1">
    <citation type="journal article" date="2006" name="J. Bacteriol.">
        <title>The Methanosarcina barkeri genome: comparative analysis with Methanosarcina acetivorans and Methanosarcina mazei reveals extensive rearrangement within methanosarcinal genomes.</title>
        <authorList>
            <person name="Maeder D.L."/>
            <person name="Anderson I."/>
            <person name="Brettin T.S."/>
            <person name="Bruce D.C."/>
            <person name="Gilna P."/>
            <person name="Han C.S."/>
            <person name="Lapidus A."/>
            <person name="Metcalf W.W."/>
            <person name="Saunders E."/>
            <person name="Tapia R."/>
            <person name="Sowers K.R."/>
        </authorList>
    </citation>
    <scope>NUCLEOTIDE SEQUENCE [LARGE SCALE GENOMIC DNA]</scope>
    <source>
        <strain>Fusaro / DSM 804</strain>
    </source>
</reference>
<proteinExistence type="inferred from homology"/>
<protein>
    <recommendedName>
        <fullName evidence="1">Digeranylgeranylglyceryl phosphate synthase</fullName>
        <shortName evidence="1">DGGGP synthase</shortName>
        <shortName evidence="1">DGGGPS</shortName>
        <ecNumber evidence="1">2.5.1.42</ecNumber>
    </recommendedName>
    <alternativeName>
        <fullName evidence="1">(S)-2,3-di-O-geranylgeranylglyceryl phosphate synthase</fullName>
    </alternativeName>
    <alternativeName>
        <fullName evidence="1">Geranylgeranylglycerol-phosphate geranylgeranyltransferase</fullName>
    </alternativeName>
</protein>
<sequence>MSASVRTYLEIMRYENCLMAGFAAIIGTLIAFNILTSNAPSSYSPGEFPLFSSVLIFLAVFLVAGAGNAINDYFDVRIDSINRPDRPIPSGRMKLKEALYFSYTLFALGTLLAFSINPICGVIALFNSLVLIFYAKTLKGTPLLGNLSIGYLTGSSFLFGASVFGLEGLKALFVLFLLAALAITAREIVKDIEDMEGDKMEGADTLPLRVGAKKASYLAALIGFLAVIFSPLPYHLSMLGLRYLYLVLLADLGFLAAIYQLLARNNPTKSSKMFKIAMFFALIAFIAGV</sequence>
<feature type="chain" id="PRO_0000350710" description="Digeranylgeranylglyceryl phosphate synthase">
    <location>
        <begin position="1"/>
        <end position="289"/>
    </location>
</feature>
<feature type="transmembrane region" description="Helical" evidence="1">
    <location>
        <begin position="17"/>
        <end position="37"/>
    </location>
</feature>
<feature type="transmembrane region" description="Helical" evidence="1">
    <location>
        <begin position="50"/>
        <end position="70"/>
    </location>
</feature>
<feature type="transmembrane region" description="Helical" evidence="1">
    <location>
        <begin position="106"/>
        <end position="126"/>
    </location>
</feature>
<feature type="transmembrane region" description="Helical" evidence="1">
    <location>
        <begin position="141"/>
        <end position="161"/>
    </location>
</feature>
<feature type="transmembrane region" description="Helical" evidence="1">
    <location>
        <begin position="163"/>
        <end position="183"/>
    </location>
</feature>
<feature type="transmembrane region" description="Helical" evidence="1">
    <location>
        <begin position="221"/>
        <end position="241"/>
    </location>
</feature>
<feature type="transmembrane region" description="Helical" evidence="1">
    <location>
        <begin position="243"/>
        <end position="263"/>
    </location>
</feature>
<feature type="transmembrane region" description="Helical" evidence="1">
    <location>
        <begin position="269"/>
        <end position="289"/>
    </location>
</feature>
<evidence type="ECO:0000255" key="1">
    <source>
        <dbReference type="HAMAP-Rule" id="MF_01286"/>
    </source>
</evidence>
<accession>Q46BD9</accession>
<gene>
    <name type="ordered locus">Mbar_A1863</name>
</gene>
<name>DGGGP_METBF</name>
<comment type="function">
    <text evidence="1">Prenyltransferase that catalyzes the transfer of the geranylgeranyl moiety of geranylgeranyl diphosphate (GGPP) to the C2 hydroxyl of (S)-3-O-geranylgeranylglyceryl phosphate (GGGP). This reaction is the second ether-bond-formation step in the biosynthesis of archaeal membrane lipids.</text>
</comment>
<comment type="catalytic activity">
    <reaction evidence="1">
        <text>sn-3-O-(geranylgeranyl)glycerol 1-phosphate + (2E,6E,10E)-geranylgeranyl diphosphate = 2,3-bis-O-(geranylgeranyl)-sn-glycerol 1-phosphate + diphosphate</text>
        <dbReference type="Rhea" id="RHEA:18109"/>
        <dbReference type="ChEBI" id="CHEBI:33019"/>
        <dbReference type="ChEBI" id="CHEBI:57677"/>
        <dbReference type="ChEBI" id="CHEBI:58756"/>
        <dbReference type="ChEBI" id="CHEBI:58837"/>
        <dbReference type="EC" id="2.5.1.42"/>
    </reaction>
</comment>
<comment type="cofactor">
    <cofactor evidence="1">
        <name>Mg(2+)</name>
        <dbReference type="ChEBI" id="CHEBI:18420"/>
    </cofactor>
</comment>
<comment type="pathway">
    <text evidence="1">Membrane lipid metabolism; glycerophospholipid metabolism.</text>
</comment>
<comment type="subcellular location">
    <subcellularLocation>
        <location evidence="1">Cell membrane</location>
        <topology evidence="1">Multi-pass membrane protein</topology>
    </subcellularLocation>
</comment>
<comment type="similarity">
    <text evidence="1">Belongs to the UbiA prenyltransferase family. DGGGP synthase subfamily.</text>
</comment>
<keyword id="KW-1003">Cell membrane</keyword>
<keyword id="KW-0444">Lipid biosynthesis</keyword>
<keyword id="KW-0443">Lipid metabolism</keyword>
<keyword id="KW-0460">Magnesium</keyword>
<keyword id="KW-0472">Membrane</keyword>
<keyword id="KW-0594">Phospholipid biosynthesis</keyword>
<keyword id="KW-1208">Phospholipid metabolism</keyword>
<keyword id="KW-0808">Transferase</keyword>
<keyword id="KW-0812">Transmembrane</keyword>
<keyword id="KW-1133">Transmembrane helix</keyword>
<dbReference type="EC" id="2.5.1.42" evidence="1"/>
<dbReference type="EMBL" id="CP000099">
    <property type="protein sequence ID" value="AAZ70803.1"/>
    <property type="molecule type" value="Genomic_DNA"/>
</dbReference>
<dbReference type="SMR" id="Q46BD9"/>
<dbReference type="STRING" id="269797.Mbar_A1863"/>
<dbReference type="PaxDb" id="269797-Mbar_A1863"/>
<dbReference type="KEGG" id="mba:Mbar_A1863"/>
<dbReference type="eggNOG" id="arCOG00476">
    <property type="taxonomic scope" value="Archaea"/>
</dbReference>
<dbReference type="HOGENOM" id="CLU_073311_1_1_2"/>
<dbReference type="OrthoDB" id="11851at2157"/>
<dbReference type="UniPathway" id="UPA00940"/>
<dbReference type="GO" id="GO:0005886">
    <property type="term" value="C:plasma membrane"/>
    <property type="evidence" value="ECO:0007669"/>
    <property type="project" value="UniProtKB-SubCell"/>
</dbReference>
<dbReference type="GO" id="GO:0047295">
    <property type="term" value="F:geranylgeranylglycerol-phosphate geranylgeranyltransferase activity"/>
    <property type="evidence" value="ECO:0007669"/>
    <property type="project" value="UniProtKB-UniRule"/>
</dbReference>
<dbReference type="GO" id="GO:0000287">
    <property type="term" value="F:magnesium ion binding"/>
    <property type="evidence" value="ECO:0007669"/>
    <property type="project" value="UniProtKB-UniRule"/>
</dbReference>
<dbReference type="GO" id="GO:0046474">
    <property type="term" value="P:glycerophospholipid biosynthetic process"/>
    <property type="evidence" value="ECO:0007669"/>
    <property type="project" value="UniProtKB-UniRule"/>
</dbReference>
<dbReference type="CDD" id="cd13961">
    <property type="entry name" value="PT_UbiA_DGGGPS"/>
    <property type="match status" value="1"/>
</dbReference>
<dbReference type="Gene3D" id="1.10.357.140">
    <property type="entry name" value="UbiA prenyltransferase"/>
    <property type="match status" value="1"/>
</dbReference>
<dbReference type="Gene3D" id="1.20.120.1780">
    <property type="entry name" value="UbiA prenyltransferase"/>
    <property type="match status" value="1"/>
</dbReference>
<dbReference type="HAMAP" id="MF_01286">
    <property type="entry name" value="DGGGP_synth"/>
    <property type="match status" value="1"/>
</dbReference>
<dbReference type="InterPro" id="IPR023547">
    <property type="entry name" value="DGGGP_synth"/>
</dbReference>
<dbReference type="InterPro" id="IPR050475">
    <property type="entry name" value="Prenyltransferase_related"/>
</dbReference>
<dbReference type="InterPro" id="IPR000537">
    <property type="entry name" value="UbiA_prenyltransferase"/>
</dbReference>
<dbReference type="InterPro" id="IPR044878">
    <property type="entry name" value="UbiA_sf"/>
</dbReference>
<dbReference type="NCBIfam" id="NF009521">
    <property type="entry name" value="PRK12882.1"/>
    <property type="match status" value="1"/>
</dbReference>
<dbReference type="PANTHER" id="PTHR42723">
    <property type="entry name" value="CHLOROPHYLL SYNTHASE"/>
    <property type="match status" value="1"/>
</dbReference>
<dbReference type="PANTHER" id="PTHR42723:SF1">
    <property type="entry name" value="CHLOROPHYLL SYNTHASE, CHLOROPLASTIC"/>
    <property type="match status" value="1"/>
</dbReference>
<dbReference type="Pfam" id="PF01040">
    <property type="entry name" value="UbiA"/>
    <property type="match status" value="1"/>
</dbReference>
<organism>
    <name type="scientific">Methanosarcina barkeri (strain Fusaro / DSM 804)</name>
    <dbReference type="NCBI Taxonomy" id="269797"/>
    <lineage>
        <taxon>Archaea</taxon>
        <taxon>Methanobacteriati</taxon>
        <taxon>Methanobacteriota</taxon>
        <taxon>Stenosarchaea group</taxon>
        <taxon>Methanomicrobia</taxon>
        <taxon>Methanosarcinales</taxon>
        <taxon>Methanosarcinaceae</taxon>
        <taxon>Methanosarcina</taxon>
    </lineage>
</organism>